<proteinExistence type="inferred from homology"/>
<name>HIS6_METJA</name>
<feature type="chain" id="PRO_0000142279" description="Imidazole glycerol phosphate synthase subunit HisF">
    <location>
        <begin position="1"/>
        <end position="272"/>
    </location>
</feature>
<feature type="active site" evidence="2">
    <location>
        <position position="11"/>
    </location>
</feature>
<feature type="active site" evidence="2">
    <location>
        <position position="130"/>
    </location>
</feature>
<sequence length="272" mass="30168">MLTKRIIPCLDIKDGRVVKGTKFLNLRDAGDPVELAQYYDDEGADELVFLDITASAEKRDIIIDVVERTAEKVFIPLTVGGGIKSIEDFRRILRAGADKVSINTAAVKNPNLIKEASEIFGSQCVVVAIDAKRHYVNEDEIDKINKNVVKVEDGYCWFEVYIYGGRKETGIDAINWAKKVEELGAGEILLTSIDKDGTKSGYDLILTKEISKSVKLPVIASGGCGKPEHVYEAFVYGKADAALMAGILHYREYTIEEIKKYCADRGIPMRLL</sequence>
<accession>Q57854</accession>
<organism>
    <name type="scientific">Methanocaldococcus jannaschii (strain ATCC 43067 / DSM 2661 / JAL-1 / JCM 10045 / NBRC 100440)</name>
    <name type="common">Methanococcus jannaschii</name>
    <dbReference type="NCBI Taxonomy" id="243232"/>
    <lineage>
        <taxon>Archaea</taxon>
        <taxon>Methanobacteriati</taxon>
        <taxon>Methanobacteriota</taxon>
        <taxon>Methanomada group</taxon>
        <taxon>Methanococci</taxon>
        <taxon>Methanococcales</taxon>
        <taxon>Methanocaldococcaceae</taxon>
        <taxon>Methanocaldococcus</taxon>
    </lineage>
</organism>
<comment type="function">
    <text evidence="1">IGPS catalyzes the conversion of PRFAR and glutamine to IGP, AICAR and glutamate. The HisF subunit catalyzes the cyclization activity that produces IGP and AICAR from PRFAR using the ammonia provided by the HisH subunit (By similarity).</text>
</comment>
<comment type="catalytic activity">
    <reaction>
        <text>5-[(5-phospho-1-deoxy-D-ribulos-1-ylimino)methylamino]-1-(5-phospho-beta-D-ribosyl)imidazole-4-carboxamide + L-glutamine = D-erythro-1-(imidazol-4-yl)glycerol 3-phosphate + 5-amino-1-(5-phospho-beta-D-ribosyl)imidazole-4-carboxamide + L-glutamate + H(+)</text>
        <dbReference type="Rhea" id="RHEA:24793"/>
        <dbReference type="ChEBI" id="CHEBI:15378"/>
        <dbReference type="ChEBI" id="CHEBI:29985"/>
        <dbReference type="ChEBI" id="CHEBI:58278"/>
        <dbReference type="ChEBI" id="CHEBI:58359"/>
        <dbReference type="ChEBI" id="CHEBI:58475"/>
        <dbReference type="ChEBI" id="CHEBI:58525"/>
        <dbReference type="EC" id="4.3.2.10"/>
    </reaction>
</comment>
<comment type="pathway">
    <text>Amino-acid biosynthesis; L-histidine biosynthesis; L-histidine from 5-phospho-alpha-D-ribose 1-diphosphate: step 5/9.</text>
</comment>
<comment type="subunit">
    <text evidence="1">Heterodimer of HisH and HisF.</text>
</comment>
<comment type="subcellular location">
    <subcellularLocation>
        <location evidence="1">Cytoplasm</location>
    </subcellularLocation>
</comment>
<comment type="similarity">
    <text evidence="3">Belongs to the HisA/HisF family.</text>
</comment>
<gene>
    <name type="primary">hisF</name>
    <name type="ordered locus">MJ0411</name>
</gene>
<dbReference type="EC" id="4.3.2.10"/>
<dbReference type="EMBL" id="L77117">
    <property type="protein sequence ID" value="AAB98400.1"/>
    <property type="molecule type" value="Genomic_DNA"/>
</dbReference>
<dbReference type="PIR" id="C64351">
    <property type="entry name" value="C64351"/>
</dbReference>
<dbReference type="RefSeq" id="WP_010869910.1">
    <property type="nucleotide sequence ID" value="NC_000909.1"/>
</dbReference>
<dbReference type="SMR" id="Q57854"/>
<dbReference type="FunCoup" id="Q57854">
    <property type="interactions" value="229"/>
</dbReference>
<dbReference type="STRING" id="243232.MJ_0411"/>
<dbReference type="PaxDb" id="243232-MJ_0411"/>
<dbReference type="EnsemblBacteria" id="AAB98400">
    <property type="protein sequence ID" value="AAB98400"/>
    <property type="gene ID" value="MJ_0411"/>
</dbReference>
<dbReference type="GeneID" id="1451271"/>
<dbReference type="KEGG" id="mja:MJ_0411"/>
<dbReference type="eggNOG" id="arCOG00617">
    <property type="taxonomic scope" value="Archaea"/>
</dbReference>
<dbReference type="HOGENOM" id="CLU_048577_4_0_2"/>
<dbReference type="InParanoid" id="Q57854"/>
<dbReference type="OrthoDB" id="6261at2157"/>
<dbReference type="PhylomeDB" id="Q57854"/>
<dbReference type="UniPathway" id="UPA00031">
    <property type="reaction ID" value="UER00010"/>
</dbReference>
<dbReference type="Proteomes" id="UP000000805">
    <property type="component" value="Chromosome"/>
</dbReference>
<dbReference type="GO" id="GO:0005737">
    <property type="term" value="C:cytoplasm"/>
    <property type="evidence" value="ECO:0007669"/>
    <property type="project" value="UniProtKB-SubCell"/>
</dbReference>
<dbReference type="GO" id="GO:0000107">
    <property type="term" value="F:imidazoleglycerol-phosphate synthase activity"/>
    <property type="evidence" value="ECO:0000318"/>
    <property type="project" value="GO_Central"/>
</dbReference>
<dbReference type="GO" id="GO:0016829">
    <property type="term" value="F:lyase activity"/>
    <property type="evidence" value="ECO:0007669"/>
    <property type="project" value="UniProtKB-KW"/>
</dbReference>
<dbReference type="GO" id="GO:0000105">
    <property type="term" value="P:L-histidine biosynthetic process"/>
    <property type="evidence" value="ECO:0007669"/>
    <property type="project" value="UniProtKB-UniRule"/>
</dbReference>
<dbReference type="CDD" id="cd04731">
    <property type="entry name" value="HisF"/>
    <property type="match status" value="1"/>
</dbReference>
<dbReference type="FunFam" id="3.20.20.70:FF:000006">
    <property type="entry name" value="Imidazole glycerol phosphate synthase subunit HisF"/>
    <property type="match status" value="1"/>
</dbReference>
<dbReference type="Gene3D" id="3.20.20.70">
    <property type="entry name" value="Aldolase class I"/>
    <property type="match status" value="1"/>
</dbReference>
<dbReference type="HAMAP" id="MF_01013">
    <property type="entry name" value="HisF"/>
    <property type="match status" value="1"/>
</dbReference>
<dbReference type="InterPro" id="IPR013785">
    <property type="entry name" value="Aldolase_TIM"/>
</dbReference>
<dbReference type="InterPro" id="IPR006062">
    <property type="entry name" value="His_biosynth"/>
</dbReference>
<dbReference type="InterPro" id="IPR004651">
    <property type="entry name" value="HisF"/>
</dbReference>
<dbReference type="InterPro" id="IPR050064">
    <property type="entry name" value="IGPS_HisA/HisF"/>
</dbReference>
<dbReference type="InterPro" id="IPR011060">
    <property type="entry name" value="RibuloseP-bd_barrel"/>
</dbReference>
<dbReference type="NCBIfam" id="TIGR00735">
    <property type="entry name" value="hisF"/>
    <property type="match status" value="1"/>
</dbReference>
<dbReference type="PANTHER" id="PTHR21235:SF2">
    <property type="entry name" value="IMIDAZOLE GLYCEROL PHOSPHATE SYNTHASE HISHF"/>
    <property type="match status" value="1"/>
</dbReference>
<dbReference type="PANTHER" id="PTHR21235">
    <property type="entry name" value="IMIDAZOLE GLYCEROL PHOSPHATE SYNTHASE SUBUNIT HISF/H IGP SYNTHASE SUBUNIT HISF/H"/>
    <property type="match status" value="1"/>
</dbReference>
<dbReference type="Pfam" id="PF00977">
    <property type="entry name" value="His_biosynth"/>
    <property type="match status" value="1"/>
</dbReference>
<dbReference type="SUPFAM" id="SSF51366">
    <property type="entry name" value="Ribulose-phoshate binding barrel"/>
    <property type="match status" value="1"/>
</dbReference>
<protein>
    <recommendedName>
        <fullName>Imidazole glycerol phosphate synthase subunit HisF</fullName>
        <ecNumber>4.3.2.10</ecNumber>
    </recommendedName>
    <alternativeName>
        <fullName>IGP synthase cyclase subunit</fullName>
    </alternativeName>
    <alternativeName>
        <fullName>IGP synthase subunit HisF</fullName>
    </alternativeName>
    <alternativeName>
        <fullName>ImGP synthase subunit HisF</fullName>
        <shortName>IGPS subunit HisF</shortName>
    </alternativeName>
</protein>
<keyword id="KW-0028">Amino-acid biosynthesis</keyword>
<keyword id="KW-0963">Cytoplasm</keyword>
<keyword id="KW-0368">Histidine biosynthesis</keyword>
<keyword id="KW-0456">Lyase</keyword>
<keyword id="KW-1185">Reference proteome</keyword>
<reference key="1">
    <citation type="journal article" date="1996" name="Science">
        <title>Complete genome sequence of the methanogenic archaeon, Methanococcus jannaschii.</title>
        <authorList>
            <person name="Bult C.J."/>
            <person name="White O."/>
            <person name="Olsen G.J."/>
            <person name="Zhou L."/>
            <person name="Fleischmann R.D."/>
            <person name="Sutton G.G."/>
            <person name="Blake J.A."/>
            <person name="FitzGerald L.M."/>
            <person name="Clayton R.A."/>
            <person name="Gocayne J.D."/>
            <person name="Kerlavage A.R."/>
            <person name="Dougherty B.A."/>
            <person name="Tomb J.-F."/>
            <person name="Adams M.D."/>
            <person name="Reich C.I."/>
            <person name="Overbeek R."/>
            <person name="Kirkness E.F."/>
            <person name="Weinstock K.G."/>
            <person name="Merrick J.M."/>
            <person name="Glodek A."/>
            <person name="Scott J.L."/>
            <person name="Geoghagen N.S.M."/>
            <person name="Weidman J.F."/>
            <person name="Fuhrmann J.L."/>
            <person name="Nguyen D."/>
            <person name="Utterback T.R."/>
            <person name="Kelley J.M."/>
            <person name="Peterson J.D."/>
            <person name="Sadow P.W."/>
            <person name="Hanna M.C."/>
            <person name="Cotton M.D."/>
            <person name="Roberts K.M."/>
            <person name="Hurst M.A."/>
            <person name="Kaine B.P."/>
            <person name="Borodovsky M."/>
            <person name="Klenk H.-P."/>
            <person name="Fraser C.M."/>
            <person name="Smith H.O."/>
            <person name="Woese C.R."/>
            <person name="Venter J.C."/>
        </authorList>
    </citation>
    <scope>NUCLEOTIDE SEQUENCE [LARGE SCALE GENOMIC DNA]</scope>
    <source>
        <strain>ATCC 43067 / DSM 2661 / JAL-1 / JCM 10045 / NBRC 100440</strain>
    </source>
</reference>
<evidence type="ECO:0000250" key="1"/>
<evidence type="ECO:0000255" key="2"/>
<evidence type="ECO:0000305" key="3"/>